<evidence type="ECO:0000255" key="1">
    <source>
        <dbReference type="HAMAP-Rule" id="MF_00469"/>
    </source>
</evidence>
<protein>
    <recommendedName>
        <fullName evidence="1">tRNA uridine(34) hydroxylase</fullName>
        <ecNumber evidence="1">1.14.-.-</ecNumber>
    </recommendedName>
    <alternativeName>
        <fullName evidence="1">tRNA hydroxylation protein O</fullName>
    </alternativeName>
</protein>
<gene>
    <name evidence="1" type="primary">trhO</name>
    <name type="ordered locus">H16_A0899</name>
</gene>
<keyword id="KW-0560">Oxidoreductase</keyword>
<keyword id="KW-1185">Reference proteome</keyword>
<keyword id="KW-0819">tRNA processing</keyword>
<accession>Q0KD76</accession>
<reference key="1">
    <citation type="journal article" date="2006" name="Nat. Biotechnol.">
        <title>Genome sequence of the bioplastic-producing 'Knallgas' bacterium Ralstonia eutropha H16.</title>
        <authorList>
            <person name="Pohlmann A."/>
            <person name="Fricke W.F."/>
            <person name="Reinecke F."/>
            <person name="Kusian B."/>
            <person name="Liesegang H."/>
            <person name="Cramm R."/>
            <person name="Eitinger T."/>
            <person name="Ewering C."/>
            <person name="Poetter M."/>
            <person name="Schwartz E."/>
            <person name="Strittmatter A."/>
            <person name="Voss I."/>
            <person name="Gottschalk G."/>
            <person name="Steinbuechel A."/>
            <person name="Friedrich B."/>
            <person name="Bowien B."/>
        </authorList>
    </citation>
    <scope>NUCLEOTIDE SEQUENCE [LARGE SCALE GENOMIC DNA]</scope>
    <source>
        <strain>ATCC 17699 / DSM 428 / KCTC 22496 / NCIMB 10442 / H16 / Stanier 337</strain>
    </source>
</reference>
<organism>
    <name type="scientific">Cupriavidus necator (strain ATCC 17699 / DSM 428 / KCTC 22496 / NCIMB 10442 / H16 / Stanier 337)</name>
    <name type="common">Ralstonia eutropha</name>
    <dbReference type="NCBI Taxonomy" id="381666"/>
    <lineage>
        <taxon>Bacteria</taxon>
        <taxon>Pseudomonadati</taxon>
        <taxon>Pseudomonadota</taxon>
        <taxon>Betaproteobacteria</taxon>
        <taxon>Burkholderiales</taxon>
        <taxon>Burkholderiaceae</taxon>
        <taxon>Cupriavidus</taxon>
    </lineage>
</organism>
<feature type="chain" id="PRO_1000013761" description="tRNA uridine(34) hydroxylase">
    <location>
        <begin position="1"/>
        <end position="282"/>
    </location>
</feature>
<feature type="domain" description="Rhodanese" evidence="1">
    <location>
        <begin position="128"/>
        <end position="222"/>
    </location>
</feature>
<feature type="active site" description="Cysteine persulfide intermediate" evidence="1">
    <location>
        <position position="182"/>
    </location>
</feature>
<proteinExistence type="inferred from homology"/>
<sequence>MQIVNISAYKFVSLDDIETLRPAMRERCEAAGLKGTILLAPEGINMFLAGPRAAIDGFMDWLHADARFADIAPKESLSENQPFKRMLVRAKKEIITMKMPLIRPEEGRAPSVRPAELKRWLDQGHDDEGRPVVMLDTRNDFEVAVGTFEDAVEYDIAKFSEFPEAVAAHKAELEGKTVVSFCTGGIRCEKAAIHMQEVGVERVYQLEGGILKYFEEVGGSHYRGDCFVFDYRTALNPNLEPAGPKQCFACRAVVTPQEQQSPHYVVGKSCPHCIGSKDQAAA</sequence>
<comment type="function">
    <text evidence="1">Catalyzes oxygen-dependent 5-hydroxyuridine (ho5U) modification at position 34 in tRNAs.</text>
</comment>
<comment type="catalytic activity">
    <reaction evidence="1">
        <text>uridine(34) in tRNA + AH2 + O2 = 5-hydroxyuridine(34) in tRNA + A + H2O</text>
        <dbReference type="Rhea" id="RHEA:64224"/>
        <dbReference type="Rhea" id="RHEA-COMP:11727"/>
        <dbReference type="Rhea" id="RHEA-COMP:13381"/>
        <dbReference type="ChEBI" id="CHEBI:13193"/>
        <dbReference type="ChEBI" id="CHEBI:15377"/>
        <dbReference type="ChEBI" id="CHEBI:15379"/>
        <dbReference type="ChEBI" id="CHEBI:17499"/>
        <dbReference type="ChEBI" id="CHEBI:65315"/>
        <dbReference type="ChEBI" id="CHEBI:136877"/>
    </reaction>
</comment>
<comment type="similarity">
    <text evidence="1">Belongs to the TrhO family.</text>
</comment>
<dbReference type="EC" id="1.14.-.-" evidence="1"/>
<dbReference type="EMBL" id="AM260479">
    <property type="protein sequence ID" value="CAJ92045.1"/>
    <property type="molecule type" value="Genomic_DNA"/>
</dbReference>
<dbReference type="RefSeq" id="WP_010812922.1">
    <property type="nucleotide sequence ID" value="NZ_CP039287.1"/>
</dbReference>
<dbReference type="SMR" id="Q0KD76"/>
<dbReference type="STRING" id="381666.H16_A0899"/>
<dbReference type="KEGG" id="reh:H16_A0899"/>
<dbReference type="eggNOG" id="COG1054">
    <property type="taxonomic scope" value="Bacteria"/>
</dbReference>
<dbReference type="HOGENOM" id="CLU_038878_0_1_4"/>
<dbReference type="OrthoDB" id="9778326at2"/>
<dbReference type="Proteomes" id="UP000008210">
    <property type="component" value="Chromosome 1"/>
</dbReference>
<dbReference type="GO" id="GO:0016705">
    <property type="term" value="F:oxidoreductase activity, acting on paired donors, with incorporation or reduction of molecular oxygen"/>
    <property type="evidence" value="ECO:0007669"/>
    <property type="project" value="UniProtKB-UniRule"/>
</dbReference>
<dbReference type="GO" id="GO:0006400">
    <property type="term" value="P:tRNA modification"/>
    <property type="evidence" value="ECO:0007669"/>
    <property type="project" value="UniProtKB-UniRule"/>
</dbReference>
<dbReference type="CDD" id="cd01518">
    <property type="entry name" value="RHOD_YceA"/>
    <property type="match status" value="1"/>
</dbReference>
<dbReference type="Gene3D" id="3.30.70.100">
    <property type="match status" value="1"/>
</dbReference>
<dbReference type="Gene3D" id="3.40.250.10">
    <property type="entry name" value="Rhodanese-like domain"/>
    <property type="match status" value="1"/>
</dbReference>
<dbReference type="HAMAP" id="MF_00469">
    <property type="entry name" value="TrhO"/>
    <property type="match status" value="1"/>
</dbReference>
<dbReference type="InterPro" id="IPR001763">
    <property type="entry name" value="Rhodanese-like_dom"/>
</dbReference>
<dbReference type="InterPro" id="IPR036873">
    <property type="entry name" value="Rhodanese-like_dom_sf"/>
</dbReference>
<dbReference type="InterPro" id="IPR020936">
    <property type="entry name" value="TrhO"/>
</dbReference>
<dbReference type="InterPro" id="IPR040503">
    <property type="entry name" value="TRHO_N"/>
</dbReference>
<dbReference type="NCBIfam" id="NF003703">
    <property type="entry name" value="PRK05320.1"/>
    <property type="match status" value="1"/>
</dbReference>
<dbReference type="PANTHER" id="PTHR43268:SF3">
    <property type="entry name" value="RHODANESE-LIKE DOMAIN-CONTAINING PROTEIN 7-RELATED"/>
    <property type="match status" value="1"/>
</dbReference>
<dbReference type="PANTHER" id="PTHR43268">
    <property type="entry name" value="THIOSULFATE SULFURTRANSFERASE/RHODANESE-LIKE DOMAIN-CONTAINING PROTEIN 2"/>
    <property type="match status" value="1"/>
</dbReference>
<dbReference type="Pfam" id="PF00581">
    <property type="entry name" value="Rhodanese"/>
    <property type="match status" value="1"/>
</dbReference>
<dbReference type="Pfam" id="PF17773">
    <property type="entry name" value="UPF0176_N"/>
    <property type="match status" value="1"/>
</dbReference>
<dbReference type="SMART" id="SM00450">
    <property type="entry name" value="RHOD"/>
    <property type="match status" value="1"/>
</dbReference>
<dbReference type="SUPFAM" id="SSF52821">
    <property type="entry name" value="Rhodanese/Cell cycle control phosphatase"/>
    <property type="match status" value="1"/>
</dbReference>
<dbReference type="PROSITE" id="PS50206">
    <property type="entry name" value="RHODANESE_3"/>
    <property type="match status" value="1"/>
</dbReference>
<name>TRHO_CUPNH</name>